<feature type="chain" id="PRO_0000272767" description="Large ribosomal subunit protein uL23">
    <location>
        <begin position="1"/>
        <end position="95"/>
    </location>
</feature>
<gene>
    <name evidence="1" type="primary">rplW</name>
    <name type="ordered locus">LEUM_0198</name>
</gene>
<proteinExistence type="inferred from homology"/>
<keyword id="KW-1185">Reference proteome</keyword>
<keyword id="KW-0687">Ribonucleoprotein</keyword>
<keyword id="KW-0689">Ribosomal protein</keyword>
<keyword id="KW-0694">RNA-binding</keyword>
<keyword id="KW-0699">rRNA-binding</keyword>
<evidence type="ECO:0000255" key="1">
    <source>
        <dbReference type="HAMAP-Rule" id="MF_01369"/>
    </source>
</evidence>
<evidence type="ECO:0000305" key="2"/>
<dbReference type="EMBL" id="CP000414">
    <property type="protein sequence ID" value="ABJ61329.1"/>
    <property type="molecule type" value="Genomic_DNA"/>
</dbReference>
<dbReference type="RefSeq" id="WP_002816036.1">
    <property type="nucleotide sequence ID" value="NC_008531.1"/>
</dbReference>
<dbReference type="SMR" id="Q03ZP3"/>
<dbReference type="EnsemblBacteria" id="ABJ61329">
    <property type="protein sequence ID" value="ABJ61329"/>
    <property type="gene ID" value="LEUM_0198"/>
</dbReference>
<dbReference type="GeneID" id="97504979"/>
<dbReference type="KEGG" id="lme:LEUM_0198"/>
<dbReference type="eggNOG" id="COG0089">
    <property type="taxonomic scope" value="Bacteria"/>
</dbReference>
<dbReference type="HOGENOM" id="CLU_037562_3_2_9"/>
<dbReference type="Proteomes" id="UP000000362">
    <property type="component" value="Chromosome"/>
</dbReference>
<dbReference type="GO" id="GO:1990904">
    <property type="term" value="C:ribonucleoprotein complex"/>
    <property type="evidence" value="ECO:0007669"/>
    <property type="project" value="UniProtKB-KW"/>
</dbReference>
<dbReference type="GO" id="GO:0005840">
    <property type="term" value="C:ribosome"/>
    <property type="evidence" value="ECO:0007669"/>
    <property type="project" value="UniProtKB-KW"/>
</dbReference>
<dbReference type="GO" id="GO:0019843">
    <property type="term" value="F:rRNA binding"/>
    <property type="evidence" value="ECO:0007669"/>
    <property type="project" value="UniProtKB-UniRule"/>
</dbReference>
<dbReference type="GO" id="GO:0003735">
    <property type="term" value="F:structural constituent of ribosome"/>
    <property type="evidence" value="ECO:0007669"/>
    <property type="project" value="InterPro"/>
</dbReference>
<dbReference type="GO" id="GO:0006412">
    <property type="term" value="P:translation"/>
    <property type="evidence" value="ECO:0007669"/>
    <property type="project" value="UniProtKB-UniRule"/>
</dbReference>
<dbReference type="FunFam" id="3.30.70.330:FF:000001">
    <property type="entry name" value="50S ribosomal protein L23"/>
    <property type="match status" value="1"/>
</dbReference>
<dbReference type="Gene3D" id="3.30.70.330">
    <property type="match status" value="1"/>
</dbReference>
<dbReference type="HAMAP" id="MF_01369_B">
    <property type="entry name" value="Ribosomal_uL23_B"/>
    <property type="match status" value="1"/>
</dbReference>
<dbReference type="InterPro" id="IPR012677">
    <property type="entry name" value="Nucleotide-bd_a/b_plait_sf"/>
</dbReference>
<dbReference type="InterPro" id="IPR013025">
    <property type="entry name" value="Ribosomal_uL23-like"/>
</dbReference>
<dbReference type="InterPro" id="IPR012678">
    <property type="entry name" value="Ribosomal_uL23/eL15/eS24_sf"/>
</dbReference>
<dbReference type="InterPro" id="IPR001014">
    <property type="entry name" value="Ribosomal_uL23_CS"/>
</dbReference>
<dbReference type="NCBIfam" id="NF004363">
    <property type="entry name" value="PRK05738.2-4"/>
    <property type="match status" value="1"/>
</dbReference>
<dbReference type="PANTHER" id="PTHR11620">
    <property type="entry name" value="60S RIBOSOMAL PROTEIN L23A"/>
    <property type="match status" value="1"/>
</dbReference>
<dbReference type="Pfam" id="PF00276">
    <property type="entry name" value="Ribosomal_L23"/>
    <property type="match status" value="1"/>
</dbReference>
<dbReference type="SUPFAM" id="SSF54189">
    <property type="entry name" value="Ribosomal proteins S24e, L23 and L15e"/>
    <property type="match status" value="1"/>
</dbReference>
<dbReference type="PROSITE" id="PS00050">
    <property type="entry name" value="RIBOSOMAL_L23"/>
    <property type="match status" value="1"/>
</dbReference>
<comment type="function">
    <text evidence="1">One of the early assembly proteins it binds 23S rRNA. One of the proteins that surrounds the polypeptide exit tunnel on the outside of the ribosome. Forms the main docking site for trigger factor binding to the ribosome.</text>
</comment>
<comment type="subunit">
    <text evidence="1">Part of the 50S ribosomal subunit. Contacts protein L29, and trigger factor when it is bound to the ribosome.</text>
</comment>
<comment type="similarity">
    <text evidence="1">Belongs to the universal ribosomal protein uL23 family.</text>
</comment>
<reference key="1">
    <citation type="journal article" date="2006" name="Proc. Natl. Acad. Sci. U.S.A.">
        <title>Comparative genomics of the lactic acid bacteria.</title>
        <authorList>
            <person name="Makarova K.S."/>
            <person name="Slesarev A."/>
            <person name="Wolf Y.I."/>
            <person name="Sorokin A."/>
            <person name="Mirkin B."/>
            <person name="Koonin E.V."/>
            <person name="Pavlov A."/>
            <person name="Pavlova N."/>
            <person name="Karamychev V."/>
            <person name="Polouchine N."/>
            <person name="Shakhova V."/>
            <person name="Grigoriev I."/>
            <person name="Lou Y."/>
            <person name="Rohksar D."/>
            <person name="Lucas S."/>
            <person name="Huang K."/>
            <person name="Goodstein D.M."/>
            <person name="Hawkins T."/>
            <person name="Plengvidhya V."/>
            <person name="Welker D."/>
            <person name="Hughes J."/>
            <person name="Goh Y."/>
            <person name="Benson A."/>
            <person name="Baldwin K."/>
            <person name="Lee J.-H."/>
            <person name="Diaz-Muniz I."/>
            <person name="Dosti B."/>
            <person name="Smeianov V."/>
            <person name="Wechter W."/>
            <person name="Barabote R."/>
            <person name="Lorca G."/>
            <person name="Altermann E."/>
            <person name="Barrangou R."/>
            <person name="Ganesan B."/>
            <person name="Xie Y."/>
            <person name="Rawsthorne H."/>
            <person name="Tamir D."/>
            <person name="Parker C."/>
            <person name="Breidt F."/>
            <person name="Broadbent J.R."/>
            <person name="Hutkins R."/>
            <person name="O'Sullivan D."/>
            <person name="Steele J."/>
            <person name="Unlu G."/>
            <person name="Saier M.H. Jr."/>
            <person name="Klaenhammer T."/>
            <person name="Richardson P."/>
            <person name="Kozyavkin S."/>
            <person name="Weimer B.C."/>
            <person name="Mills D.A."/>
        </authorList>
    </citation>
    <scope>NUCLEOTIDE SEQUENCE [LARGE SCALE GENOMIC DNA]</scope>
    <source>
        <strain>ATCC 8293 / DSM 20343 / BCRC 11652 / CCM 1803 / JCM 6124 / NCDO 523 / NBRC 100496 / NCIMB 8023 / NCTC 12954 / NRRL B-1118 / 37Y</strain>
    </source>
</reference>
<accession>Q03ZP3</accession>
<organism>
    <name type="scientific">Leuconostoc mesenteroides subsp. mesenteroides (strain ATCC 8293 / DSM 20343 / BCRC 11652 / CCM 1803 / JCM 6124 / NCDO 523 / NBRC 100496 / NCIMB 8023 / NCTC 12954 / NRRL B-1118 / 37Y)</name>
    <dbReference type="NCBI Taxonomy" id="203120"/>
    <lineage>
        <taxon>Bacteria</taxon>
        <taxon>Bacillati</taxon>
        <taxon>Bacillota</taxon>
        <taxon>Bacilli</taxon>
        <taxon>Lactobacillales</taxon>
        <taxon>Lactobacillaceae</taxon>
        <taxon>Leuconostoc</taxon>
    </lineage>
</organism>
<name>RL23_LEUMM</name>
<sequence length="95" mass="10961">MDARDIIRRPIITEASMAQTERKRYVFEVDTRATKPEIKKAIEEIFEVKVSGLNTANVRGKKKRQGRYVGYTRKLKKATVTLSKDSKDIQIFNEG</sequence>
<protein>
    <recommendedName>
        <fullName evidence="1">Large ribosomal subunit protein uL23</fullName>
    </recommendedName>
    <alternativeName>
        <fullName evidence="2">50S ribosomal protein L23</fullName>
    </alternativeName>
</protein>